<proteinExistence type="inferred from homology"/>
<organism>
    <name type="scientific">Methanococcoides burtonii (strain DSM 6242 / NBRC 107633 / OCM 468 / ACE-M)</name>
    <dbReference type="NCBI Taxonomy" id="259564"/>
    <lineage>
        <taxon>Archaea</taxon>
        <taxon>Methanobacteriati</taxon>
        <taxon>Methanobacteriota</taxon>
        <taxon>Stenosarchaea group</taxon>
        <taxon>Methanomicrobia</taxon>
        <taxon>Methanosarcinales</taxon>
        <taxon>Methanosarcinaceae</taxon>
        <taxon>Methanococcoides</taxon>
    </lineage>
</organism>
<evidence type="ECO:0000255" key="1">
    <source>
        <dbReference type="HAMAP-Rule" id="MF_02114"/>
    </source>
</evidence>
<evidence type="ECO:0000305" key="2"/>
<keyword id="KW-0342">GTP-binding</keyword>
<keyword id="KW-0547">Nucleotide-binding</keyword>
<keyword id="KW-0548">Nucleotidyltransferase</keyword>
<keyword id="KW-0808">Transferase</keyword>
<gene>
    <name evidence="1" type="primary">cofC</name>
    <name type="ordered locus">Mbur_1305</name>
</gene>
<accession>Q12WF3</accession>
<dbReference type="EC" id="2.7.7.68" evidence="1"/>
<dbReference type="EMBL" id="CP000300">
    <property type="protein sequence ID" value="ABE52223.1"/>
    <property type="status" value="ALT_INIT"/>
    <property type="molecule type" value="Genomic_DNA"/>
</dbReference>
<dbReference type="RefSeq" id="WP_048063292.1">
    <property type="nucleotide sequence ID" value="NC_007955.1"/>
</dbReference>
<dbReference type="SMR" id="Q12WF3"/>
<dbReference type="STRING" id="259564.Mbur_1305"/>
<dbReference type="GeneID" id="3998593"/>
<dbReference type="KEGG" id="mbu:Mbur_1305"/>
<dbReference type="HOGENOM" id="CLU_076569_2_0_2"/>
<dbReference type="OrthoDB" id="11179at2157"/>
<dbReference type="UniPathway" id="UPA00071"/>
<dbReference type="Proteomes" id="UP000001979">
    <property type="component" value="Chromosome"/>
</dbReference>
<dbReference type="GO" id="GO:0005525">
    <property type="term" value="F:GTP binding"/>
    <property type="evidence" value="ECO:0007669"/>
    <property type="project" value="UniProtKB-KW"/>
</dbReference>
<dbReference type="GO" id="GO:0043814">
    <property type="term" value="F:phospholactate guanylyltransferase activity"/>
    <property type="evidence" value="ECO:0007669"/>
    <property type="project" value="UniProtKB-EC"/>
</dbReference>
<dbReference type="GO" id="GO:0052645">
    <property type="term" value="P:F420-0 metabolic process"/>
    <property type="evidence" value="ECO:0007669"/>
    <property type="project" value="UniProtKB-UniRule"/>
</dbReference>
<dbReference type="Gene3D" id="6.10.140.50">
    <property type="match status" value="1"/>
</dbReference>
<dbReference type="Gene3D" id="3.90.550.10">
    <property type="entry name" value="Spore Coat Polysaccharide Biosynthesis Protein SpsA, Chain A"/>
    <property type="match status" value="1"/>
</dbReference>
<dbReference type="HAMAP" id="MF_02114">
    <property type="entry name" value="CofC"/>
    <property type="match status" value="1"/>
</dbReference>
<dbReference type="InterPro" id="IPR002835">
    <property type="entry name" value="CofC"/>
</dbReference>
<dbReference type="InterPro" id="IPR029044">
    <property type="entry name" value="Nucleotide-diphossugar_trans"/>
</dbReference>
<dbReference type="NCBIfam" id="TIGR03552">
    <property type="entry name" value="F420_cofC"/>
    <property type="match status" value="1"/>
</dbReference>
<dbReference type="PANTHER" id="PTHR40392">
    <property type="entry name" value="2-PHOSPHO-L-LACTATE GUANYLYLTRANSFERASE"/>
    <property type="match status" value="1"/>
</dbReference>
<dbReference type="PANTHER" id="PTHR40392:SF1">
    <property type="entry name" value="2-PHOSPHO-L-LACTATE GUANYLYLTRANSFERASE"/>
    <property type="match status" value="1"/>
</dbReference>
<dbReference type="Pfam" id="PF01983">
    <property type="entry name" value="CofC"/>
    <property type="match status" value="1"/>
</dbReference>
<dbReference type="SUPFAM" id="SSF53448">
    <property type="entry name" value="Nucleotide-diphospho-sugar transferases"/>
    <property type="match status" value="1"/>
</dbReference>
<sequence length="215" mass="23967">MRAVIPYKNENAKSRLSPILSKKDREEFVELMLKDVIKALDDAEVVNIDILTTSAEGIPNDFNGNVTITEPGLNDSINEYLQNANEPILIIMADLPLVTGDHIRKIISFSEDVVIVPGKGGGTNILFIRHPNEFTVKYHDCSFISHCEITDELDKSMHIFDSFLASTDIDEPHDIVELMLHGKGQAKEYAEKRFGSETGKGRVKISHLSKLSGFV</sequence>
<feature type="chain" id="PRO_0000398742" description="2-phospho-L-lactate guanylyltransferase">
    <location>
        <begin position="1"/>
        <end position="215"/>
    </location>
</feature>
<comment type="function">
    <text evidence="1">Guanylyltransferase that catalyzes the activation of (2S)-2-phospholactate (2-PL) as (2S)-lactyl-2-diphospho-5'-guanosine, via the condensation of 2-PL with GTP. It is involved in the biosynthesis of coenzyme F420, a hydride carrier cofactor.</text>
</comment>
<comment type="catalytic activity">
    <reaction evidence="1">
        <text>(2S)-2-phospholactate + GTP + H(+) = (2S)-lactyl-2-diphospho-5'-guanosine + diphosphate</text>
        <dbReference type="Rhea" id="RHEA:63424"/>
        <dbReference type="ChEBI" id="CHEBI:15378"/>
        <dbReference type="ChEBI" id="CHEBI:33019"/>
        <dbReference type="ChEBI" id="CHEBI:37565"/>
        <dbReference type="ChEBI" id="CHEBI:59435"/>
        <dbReference type="ChEBI" id="CHEBI:59906"/>
        <dbReference type="EC" id="2.7.7.68"/>
    </reaction>
</comment>
<comment type="pathway">
    <text evidence="1">Cofactor biosynthesis; coenzyme F420 biosynthesis.</text>
</comment>
<comment type="subunit">
    <text evidence="1">Homodimer.</text>
</comment>
<comment type="similarity">
    <text evidence="1">Belongs to the CofC family.</text>
</comment>
<comment type="sequence caution" evidence="2">
    <conflict type="erroneous initiation">
        <sequence resource="EMBL-CDS" id="ABE52223"/>
    </conflict>
    <text>Extended N-terminus.</text>
</comment>
<name>COFC_METBU</name>
<reference key="1">
    <citation type="journal article" date="2009" name="ISME J.">
        <title>The genome sequence of the psychrophilic archaeon, Methanococcoides burtonii: the role of genome evolution in cold adaptation.</title>
        <authorList>
            <person name="Allen M.A."/>
            <person name="Lauro F.M."/>
            <person name="Williams T.J."/>
            <person name="Burg D."/>
            <person name="Siddiqui K.S."/>
            <person name="De Francisci D."/>
            <person name="Chong K.W."/>
            <person name="Pilak O."/>
            <person name="Chew H.H."/>
            <person name="De Maere M.Z."/>
            <person name="Ting L."/>
            <person name="Katrib M."/>
            <person name="Ng C."/>
            <person name="Sowers K.R."/>
            <person name="Galperin M.Y."/>
            <person name="Anderson I.J."/>
            <person name="Ivanova N."/>
            <person name="Dalin E."/>
            <person name="Martinez M."/>
            <person name="Lapidus A."/>
            <person name="Hauser L."/>
            <person name="Land M."/>
            <person name="Thomas T."/>
            <person name="Cavicchioli R."/>
        </authorList>
    </citation>
    <scope>NUCLEOTIDE SEQUENCE [LARGE SCALE GENOMIC DNA]</scope>
    <source>
        <strain>DSM 6242 / NBRC 107633 / OCM 468 / ACE-M</strain>
    </source>
</reference>
<protein>
    <recommendedName>
        <fullName evidence="1">2-phospho-L-lactate guanylyltransferase</fullName>
        <shortName evidence="1">LP guanylyltransferase</shortName>
        <ecNumber evidence="1">2.7.7.68</ecNumber>
    </recommendedName>
</protein>